<keyword id="KW-0997">Cell inner membrane</keyword>
<keyword id="KW-1003">Cell membrane</keyword>
<keyword id="KW-0133">Cell shape</keyword>
<keyword id="KW-0961">Cell wall biogenesis/degradation</keyword>
<keyword id="KW-0328">Glycosyltransferase</keyword>
<keyword id="KW-0472">Membrane</keyword>
<keyword id="KW-0573">Peptidoglycan synthesis</keyword>
<keyword id="KW-0808">Transferase</keyword>
<keyword id="KW-0812">Transmembrane</keyword>
<keyword id="KW-1133">Transmembrane helix</keyword>
<evidence type="ECO:0000255" key="1">
    <source>
        <dbReference type="HAMAP-Rule" id="MF_00766"/>
    </source>
</evidence>
<organism>
    <name type="scientific">Rhodopseudomonas palustris (strain ATCC BAA-98 / CGA009)</name>
    <dbReference type="NCBI Taxonomy" id="258594"/>
    <lineage>
        <taxon>Bacteria</taxon>
        <taxon>Pseudomonadati</taxon>
        <taxon>Pseudomonadota</taxon>
        <taxon>Alphaproteobacteria</taxon>
        <taxon>Hyphomicrobiales</taxon>
        <taxon>Nitrobacteraceae</taxon>
        <taxon>Rhodopseudomonas</taxon>
    </lineage>
</organism>
<gene>
    <name evidence="1" type="primary">mtgA</name>
    <name type="ordered locus">RPA0525</name>
</gene>
<proteinExistence type="inferred from homology"/>
<name>MTGA_RHOPA</name>
<reference key="1">
    <citation type="journal article" date="2004" name="Nat. Biotechnol.">
        <title>Complete genome sequence of the metabolically versatile photosynthetic bacterium Rhodopseudomonas palustris.</title>
        <authorList>
            <person name="Larimer F.W."/>
            <person name="Chain P."/>
            <person name="Hauser L."/>
            <person name="Lamerdin J.E."/>
            <person name="Malfatti S."/>
            <person name="Do L."/>
            <person name="Land M.L."/>
            <person name="Pelletier D.A."/>
            <person name="Beatty J.T."/>
            <person name="Lang A.S."/>
            <person name="Tabita F.R."/>
            <person name="Gibson J.L."/>
            <person name="Hanson T.E."/>
            <person name="Bobst C."/>
            <person name="Torres y Torres J.L."/>
            <person name="Peres C."/>
            <person name="Harrison F.H."/>
            <person name="Gibson J."/>
            <person name="Harwood C.S."/>
        </authorList>
    </citation>
    <scope>NUCLEOTIDE SEQUENCE [LARGE SCALE GENOMIC DNA]</scope>
    <source>
        <strain>ATCC BAA-98 / CGA009</strain>
    </source>
</reference>
<protein>
    <recommendedName>
        <fullName evidence="1">Biosynthetic peptidoglycan transglycosylase</fullName>
        <ecNumber evidence="1">2.4.99.28</ecNumber>
    </recommendedName>
    <alternativeName>
        <fullName evidence="1">Glycan polymerase</fullName>
    </alternativeName>
    <alternativeName>
        <fullName evidence="1">Peptidoglycan glycosyltransferase MtgA</fullName>
        <shortName evidence="1">PGT</shortName>
    </alternativeName>
</protein>
<dbReference type="EC" id="2.4.99.28" evidence="1"/>
<dbReference type="EMBL" id="BX572594">
    <property type="protein sequence ID" value="CAE25969.1"/>
    <property type="molecule type" value="Genomic_DNA"/>
</dbReference>
<dbReference type="RefSeq" id="WP_011156093.1">
    <property type="nucleotide sequence ID" value="NZ_CP116810.1"/>
</dbReference>
<dbReference type="SMR" id="Q6NCE7"/>
<dbReference type="STRING" id="258594.RPA0525"/>
<dbReference type="CAZy" id="GT51">
    <property type="family name" value="Glycosyltransferase Family 51"/>
</dbReference>
<dbReference type="GeneID" id="66891543"/>
<dbReference type="eggNOG" id="COG0744">
    <property type="taxonomic scope" value="Bacteria"/>
</dbReference>
<dbReference type="HOGENOM" id="CLU_006354_1_1_5"/>
<dbReference type="PhylomeDB" id="Q6NCE7"/>
<dbReference type="UniPathway" id="UPA00219"/>
<dbReference type="GO" id="GO:0009274">
    <property type="term" value="C:peptidoglycan-based cell wall"/>
    <property type="evidence" value="ECO:0007669"/>
    <property type="project" value="InterPro"/>
</dbReference>
<dbReference type="GO" id="GO:0005886">
    <property type="term" value="C:plasma membrane"/>
    <property type="evidence" value="ECO:0007669"/>
    <property type="project" value="UniProtKB-SubCell"/>
</dbReference>
<dbReference type="GO" id="GO:0016763">
    <property type="term" value="F:pentosyltransferase activity"/>
    <property type="evidence" value="ECO:0007669"/>
    <property type="project" value="InterPro"/>
</dbReference>
<dbReference type="GO" id="GO:0008955">
    <property type="term" value="F:peptidoglycan glycosyltransferase activity"/>
    <property type="evidence" value="ECO:0007669"/>
    <property type="project" value="UniProtKB-UniRule"/>
</dbReference>
<dbReference type="GO" id="GO:0071555">
    <property type="term" value="P:cell wall organization"/>
    <property type="evidence" value="ECO:0007669"/>
    <property type="project" value="UniProtKB-KW"/>
</dbReference>
<dbReference type="GO" id="GO:0009252">
    <property type="term" value="P:peptidoglycan biosynthetic process"/>
    <property type="evidence" value="ECO:0007669"/>
    <property type="project" value="UniProtKB-UniRule"/>
</dbReference>
<dbReference type="GO" id="GO:0008360">
    <property type="term" value="P:regulation of cell shape"/>
    <property type="evidence" value="ECO:0007669"/>
    <property type="project" value="UniProtKB-KW"/>
</dbReference>
<dbReference type="Gene3D" id="1.10.3810.10">
    <property type="entry name" value="Biosynthetic peptidoglycan transglycosylase-like"/>
    <property type="match status" value="1"/>
</dbReference>
<dbReference type="HAMAP" id="MF_00766">
    <property type="entry name" value="PGT_MtgA"/>
    <property type="match status" value="1"/>
</dbReference>
<dbReference type="InterPro" id="IPR001264">
    <property type="entry name" value="Glyco_trans_51"/>
</dbReference>
<dbReference type="InterPro" id="IPR023346">
    <property type="entry name" value="Lysozyme-like_dom_sf"/>
</dbReference>
<dbReference type="InterPro" id="IPR036950">
    <property type="entry name" value="PBP_transglycosylase"/>
</dbReference>
<dbReference type="InterPro" id="IPR011812">
    <property type="entry name" value="Pep_trsgly"/>
</dbReference>
<dbReference type="NCBIfam" id="TIGR02070">
    <property type="entry name" value="mono_pep_trsgly"/>
    <property type="match status" value="1"/>
</dbReference>
<dbReference type="PANTHER" id="PTHR30400:SF0">
    <property type="entry name" value="BIOSYNTHETIC PEPTIDOGLYCAN TRANSGLYCOSYLASE"/>
    <property type="match status" value="1"/>
</dbReference>
<dbReference type="PANTHER" id="PTHR30400">
    <property type="entry name" value="MONOFUNCTIONAL BIOSYNTHETIC PEPTIDOGLYCAN TRANSGLYCOSYLASE"/>
    <property type="match status" value="1"/>
</dbReference>
<dbReference type="Pfam" id="PF00912">
    <property type="entry name" value="Transgly"/>
    <property type="match status" value="1"/>
</dbReference>
<dbReference type="SUPFAM" id="SSF53955">
    <property type="entry name" value="Lysozyme-like"/>
    <property type="match status" value="1"/>
</dbReference>
<feature type="chain" id="PRO_0000257687" description="Biosynthetic peptidoglycan transglycosylase">
    <location>
        <begin position="1"/>
        <end position="236"/>
    </location>
</feature>
<feature type="transmembrane region" description="Helical" evidence="1">
    <location>
        <begin position="17"/>
        <end position="37"/>
    </location>
</feature>
<sequence length="236" mass="25785">MSDPVASAPRTKRVVRIVILVALALLALPYLLTILYGGGQPVSTLMLWRWATGAPVSRTWIDIENISPALPRSVVAAEDAKFCSHHGIDWDSVRDVIDDMQDGEASRGGSTITQQVAKNLFLWPGRSMIRKALEAPLALWIDFVLPKQRILEIYLNIAEWGPDGQFGAMAGADYAFGRSAAQLSAKEAATLAAILPNPRVRSAKAPGPGVRRLAATYVARARAAELRQCWRENRES</sequence>
<comment type="function">
    <text evidence="1">Peptidoglycan polymerase that catalyzes glycan chain elongation from lipid-linked precursors.</text>
</comment>
<comment type="catalytic activity">
    <reaction evidence="1">
        <text>[GlcNAc-(1-&gt;4)-Mur2Ac(oyl-L-Ala-gamma-D-Glu-L-Lys-D-Ala-D-Ala)](n)-di-trans,octa-cis-undecaprenyl diphosphate + beta-D-GlcNAc-(1-&gt;4)-Mur2Ac(oyl-L-Ala-gamma-D-Glu-L-Lys-D-Ala-D-Ala)-di-trans,octa-cis-undecaprenyl diphosphate = [GlcNAc-(1-&gt;4)-Mur2Ac(oyl-L-Ala-gamma-D-Glu-L-Lys-D-Ala-D-Ala)](n+1)-di-trans,octa-cis-undecaprenyl diphosphate + di-trans,octa-cis-undecaprenyl diphosphate + H(+)</text>
        <dbReference type="Rhea" id="RHEA:23708"/>
        <dbReference type="Rhea" id="RHEA-COMP:9602"/>
        <dbReference type="Rhea" id="RHEA-COMP:9603"/>
        <dbReference type="ChEBI" id="CHEBI:15378"/>
        <dbReference type="ChEBI" id="CHEBI:58405"/>
        <dbReference type="ChEBI" id="CHEBI:60033"/>
        <dbReference type="ChEBI" id="CHEBI:78435"/>
        <dbReference type="EC" id="2.4.99.28"/>
    </reaction>
</comment>
<comment type="pathway">
    <text evidence="1">Cell wall biogenesis; peptidoglycan biosynthesis.</text>
</comment>
<comment type="subcellular location">
    <subcellularLocation>
        <location evidence="1">Cell inner membrane</location>
        <topology evidence="1">Single-pass membrane protein</topology>
    </subcellularLocation>
</comment>
<comment type="similarity">
    <text evidence="1">Belongs to the glycosyltransferase 51 family.</text>
</comment>
<accession>Q6NCE7</accession>